<evidence type="ECO:0000256" key="1">
    <source>
        <dbReference type="SAM" id="MobiDB-lite"/>
    </source>
</evidence>
<evidence type="ECO:0000269" key="2">
    <source>
    </source>
</evidence>
<evidence type="ECO:0000269" key="3">
    <source>
    </source>
</evidence>
<evidence type="ECO:0000269" key="4">
    <source>
    </source>
</evidence>
<evidence type="ECO:0000269" key="5">
    <source>
    </source>
</evidence>
<evidence type="ECO:0000305" key="6"/>
<evidence type="ECO:0007744" key="7">
    <source>
    </source>
</evidence>
<evidence type="ECO:0007744" key="8">
    <source>
    </source>
</evidence>
<evidence type="ECO:0007744" key="9">
    <source>
    </source>
</evidence>
<organism>
    <name type="scientific">Saccharomyces cerevisiae (strain ATCC 204508 / S288c)</name>
    <name type="common">Baker's yeast</name>
    <dbReference type="NCBI Taxonomy" id="559292"/>
    <lineage>
        <taxon>Eukaryota</taxon>
        <taxon>Fungi</taxon>
        <taxon>Dikarya</taxon>
        <taxon>Ascomycota</taxon>
        <taxon>Saccharomycotina</taxon>
        <taxon>Saccharomycetes</taxon>
        <taxon>Saccharomycetales</taxon>
        <taxon>Saccharomycetaceae</taxon>
        <taxon>Saccharomyces</taxon>
    </lineage>
</organism>
<dbReference type="EMBL" id="X76053">
    <property type="protein sequence ID" value="CAA53643.1"/>
    <property type="status" value="ALT_INIT"/>
    <property type="molecule type" value="Genomic_DNA"/>
</dbReference>
<dbReference type="EMBL" id="Z36149">
    <property type="protein sequence ID" value="CAA85244.1"/>
    <property type="status" value="ALT_INIT"/>
    <property type="molecule type" value="Genomic_DNA"/>
</dbReference>
<dbReference type="EMBL" id="BK006936">
    <property type="protein sequence ID" value="DAA07395.1"/>
    <property type="molecule type" value="Genomic_DNA"/>
</dbReference>
<dbReference type="PIR" id="S44542">
    <property type="entry name" value="S44542"/>
</dbReference>
<dbReference type="RefSeq" id="NP_009839.4">
    <property type="nucleotide sequence ID" value="NM_001178628.3"/>
</dbReference>
<dbReference type="SMR" id="P38352"/>
<dbReference type="BioGRID" id="32974">
    <property type="interactions" value="38"/>
</dbReference>
<dbReference type="ComplexPortal" id="CPX-3254">
    <property type="entry name" value="SCF-Saf1 ubiquitin ligase complex"/>
</dbReference>
<dbReference type="DIP" id="DIP-6307N"/>
<dbReference type="FunCoup" id="P38352">
    <property type="interactions" value="158"/>
</dbReference>
<dbReference type="IntAct" id="P38352">
    <property type="interactions" value="8"/>
</dbReference>
<dbReference type="MINT" id="P38352"/>
<dbReference type="STRING" id="4932.YBR280C"/>
<dbReference type="GlyGen" id="P38352">
    <property type="glycosylation" value="3 sites, 1 O-linked glycan (3 sites)"/>
</dbReference>
<dbReference type="iPTMnet" id="P38352"/>
<dbReference type="PaxDb" id="4932-YBR280C"/>
<dbReference type="PeptideAtlas" id="P38352"/>
<dbReference type="EnsemblFungi" id="YBR280C_mRNA">
    <property type="protein sequence ID" value="YBR280C"/>
    <property type="gene ID" value="YBR280C"/>
</dbReference>
<dbReference type="GeneID" id="852583"/>
<dbReference type="KEGG" id="sce:YBR280C"/>
<dbReference type="AGR" id="SGD:S000000484"/>
<dbReference type="SGD" id="S000000484">
    <property type="gene designation" value="SAF1"/>
</dbReference>
<dbReference type="VEuPathDB" id="FungiDB:YBR280C"/>
<dbReference type="eggNOG" id="ENOG502QUVE">
    <property type="taxonomic scope" value="Eukaryota"/>
</dbReference>
<dbReference type="HOGENOM" id="CLU_460835_0_0_1"/>
<dbReference type="InParanoid" id="P38352"/>
<dbReference type="OMA" id="MGDYHYL"/>
<dbReference type="OrthoDB" id="61110at2759"/>
<dbReference type="BioCyc" id="YEAST:G3O-29200-MONOMER"/>
<dbReference type="UniPathway" id="UPA00143"/>
<dbReference type="BioGRID-ORCS" id="852583">
    <property type="hits" value="0 hits in 10 CRISPR screens"/>
</dbReference>
<dbReference type="PRO" id="PR:P38352"/>
<dbReference type="Proteomes" id="UP000002311">
    <property type="component" value="Chromosome II"/>
</dbReference>
<dbReference type="RNAct" id="P38352">
    <property type="molecule type" value="protein"/>
</dbReference>
<dbReference type="GO" id="GO:0005737">
    <property type="term" value="C:cytoplasm"/>
    <property type="evidence" value="ECO:0000318"/>
    <property type="project" value="GO_Central"/>
</dbReference>
<dbReference type="GO" id="GO:0019005">
    <property type="term" value="C:SCF ubiquitin ligase complex"/>
    <property type="evidence" value="ECO:0000314"/>
    <property type="project" value="SGD"/>
</dbReference>
<dbReference type="GO" id="GO:0016567">
    <property type="term" value="P:protein ubiquitination"/>
    <property type="evidence" value="ECO:0007669"/>
    <property type="project" value="UniProtKB-UniPathway"/>
</dbReference>
<dbReference type="GO" id="GO:0031146">
    <property type="term" value="P:SCF-dependent proteasomal ubiquitin-dependent protein catabolic process"/>
    <property type="evidence" value="ECO:0000315"/>
    <property type="project" value="SGD"/>
</dbReference>
<dbReference type="GO" id="GO:0006511">
    <property type="term" value="P:ubiquitin-dependent protein catabolic process"/>
    <property type="evidence" value="ECO:0000314"/>
    <property type="project" value="ComplexPortal"/>
</dbReference>
<dbReference type="FunFam" id="2.130.10.30:FF:000055">
    <property type="entry name" value="SCF-associated factor 1"/>
    <property type="match status" value="1"/>
</dbReference>
<dbReference type="FunFam" id="2.130.10.30:FF:000075">
    <property type="entry name" value="SCF-associated factor 1"/>
    <property type="match status" value="1"/>
</dbReference>
<dbReference type="Gene3D" id="2.130.10.30">
    <property type="entry name" value="Regulator of chromosome condensation 1/beta-lactamase-inhibitor protein II"/>
    <property type="match status" value="3"/>
</dbReference>
<dbReference type="InterPro" id="IPR036047">
    <property type="entry name" value="F-box-like_dom_sf"/>
</dbReference>
<dbReference type="InterPro" id="IPR051553">
    <property type="entry name" value="Ran_GTPase-activating"/>
</dbReference>
<dbReference type="InterPro" id="IPR009091">
    <property type="entry name" value="RCC1/BLIP-II"/>
</dbReference>
<dbReference type="InterPro" id="IPR000408">
    <property type="entry name" value="Reg_chr_condens"/>
</dbReference>
<dbReference type="PANTHER" id="PTHR45982">
    <property type="entry name" value="REGULATOR OF CHROMOSOME CONDENSATION"/>
    <property type="match status" value="1"/>
</dbReference>
<dbReference type="PANTHER" id="PTHR45982:SF1">
    <property type="entry name" value="REGULATOR OF CHROMOSOME CONDENSATION"/>
    <property type="match status" value="1"/>
</dbReference>
<dbReference type="Pfam" id="PF13540">
    <property type="entry name" value="RCC1_2"/>
    <property type="match status" value="1"/>
</dbReference>
<dbReference type="SUPFAM" id="SSF81383">
    <property type="entry name" value="F-box domain"/>
    <property type="match status" value="1"/>
</dbReference>
<dbReference type="SUPFAM" id="SSF50985">
    <property type="entry name" value="RCC1/BLIP-II"/>
    <property type="match status" value="1"/>
</dbReference>
<dbReference type="PROSITE" id="PS00626">
    <property type="entry name" value="RCC1_2"/>
    <property type="match status" value="1"/>
</dbReference>
<dbReference type="PROSITE" id="PS50012">
    <property type="entry name" value="RCC1_3"/>
    <property type="match status" value="2"/>
</dbReference>
<name>SAF1_YEAST</name>
<reference key="1">
    <citation type="journal article" date="1994" name="Yeast">
        <title>The sequence of a 32,420 bp segment located on the right arm of chromosome II from Saccharomyces cerevisiae.</title>
        <authorList>
            <person name="Holmstroem K."/>
            <person name="Brandt T."/>
            <person name="Kallesoe T."/>
        </authorList>
    </citation>
    <scope>NUCLEOTIDE SEQUENCE [GENOMIC DNA]</scope>
    <source>
        <strain>ATCC 204508 / S288c</strain>
    </source>
</reference>
<reference key="2">
    <citation type="journal article" date="1994" name="EMBO J.">
        <title>Complete DNA sequence of yeast chromosome II.</title>
        <authorList>
            <person name="Feldmann H."/>
            <person name="Aigle M."/>
            <person name="Aljinovic G."/>
            <person name="Andre B."/>
            <person name="Baclet M.C."/>
            <person name="Barthe C."/>
            <person name="Baur A."/>
            <person name="Becam A.-M."/>
            <person name="Biteau N."/>
            <person name="Boles E."/>
            <person name="Brandt T."/>
            <person name="Brendel M."/>
            <person name="Brueckner M."/>
            <person name="Bussereau F."/>
            <person name="Christiansen C."/>
            <person name="Contreras R."/>
            <person name="Crouzet M."/>
            <person name="Cziepluch C."/>
            <person name="Demolis N."/>
            <person name="Delaveau T."/>
            <person name="Doignon F."/>
            <person name="Domdey H."/>
            <person name="Duesterhus S."/>
            <person name="Dubois E."/>
            <person name="Dujon B."/>
            <person name="El Bakkoury M."/>
            <person name="Entian K.-D."/>
            <person name="Feuermann M."/>
            <person name="Fiers W."/>
            <person name="Fobo G.M."/>
            <person name="Fritz C."/>
            <person name="Gassenhuber J."/>
            <person name="Glansdorff N."/>
            <person name="Goffeau A."/>
            <person name="Grivell L.A."/>
            <person name="de Haan M."/>
            <person name="Hein C."/>
            <person name="Herbert C.J."/>
            <person name="Hollenberg C.P."/>
            <person name="Holmstroem K."/>
            <person name="Jacq C."/>
            <person name="Jacquet M."/>
            <person name="Jauniaux J.-C."/>
            <person name="Jonniaux J.-L."/>
            <person name="Kallesoee T."/>
            <person name="Kiesau P."/>
            <person name="Kirchrath L."/>
            <person name="Koetter P."/>
            <person name="Korol S."/>
            <person name="Liebl S."/>
            <person name="Logghe M."/>
            <person name="Lohan A.J.E."/>
            <person name="Louis E.J."/>
            <person name="Li Z.Y."/>
            <person name="Maat M.J."/>
            <person name="Mallet L."/>
            <person name="Mannhaupt G."/>
            <person name="Messenguy F."/>
            <person name="Miosga T."/>
            <person name="Molemans F."/>
            <person name="Mueller S."/>
            <person name="Nasr F."/>
            <person name="Obermaier B."/>
            <person name="Perea J."/>
            <person name="Pierard A."/>
            <person name="Piravandi E."/>
            <person name="Pohl F.M."/>
            <person name="Pohl T.M."/>
            <person name="Potier S."/>
            <person name="Proft M."/>
            <person name="Purnelle B."/>
            <person name="Ramezani Rad M."/>
            <person name="Rieger M."/>
            <person name="Rose M."/>
            <person name="Schaaff-Gerstenschlaeger I."/>
            <person name="Scherens B."/>
            <person name="Schwarzlose C."/>
            <person name="Skala J."/>
            <person name="Slonimski P.P."/>
            <person name="Smits P.H.M."/>
            <person name="Souciet J.-L."/>
            <person name="Steensma H.Y."/>
            <person name="Stucka R."/>
            <person name="Urrestarazu L.A."/>
            <person name="van der Aart Q.J.M."/>
            <person name="Van Dyck L."/>
            <person name="Vassarotti A."/>
            <person name="Vetter I."/>
            <person name="Vierendeels F."/>
            <person name="Vissers S."/>
            <person name="Wagner G."/>
            <person name="de Wergifosse P."/>
            <person name="Wolfe K.H."/>
            <person name="Zagulski M."/>
            <person name="Zimmermann F.K."/>
            <person name="Mewes H.-W."/>
            <person name="Kleine K."/>
        </authorList>
    </citation>
    <scope>NUCLEOTIDE SEQUENCE [LARGE SCALE GENOMIC DNA]</scope>
    <source>
        <strain>ATCC 204508 / S288c</strain>
    </source>
</reference>
<reference key="3">
    <citation type="journal article" date="2014" name="G3 (Bethesda)">
        <title>The reference genome sequence of Saccharomyces cerevisiae: Then and now.</title>
        <authorList>
            <person name="Engel S.R."/>
            <person name="Dietrich F.S."/>
            <person name="Fisk D.G."/>
            <person name="Binkley G."/>
            <person name="Balakrishnan R."/>
            <person name="Costanzo M.C."/>
            <person name="Dwight S.S."/>
            <person name="Hitz B.C."/>
            <person name="Karra K."/>
            <person name="Nash R.S."/>
            <person name="Weng S."/>
            <person name="Wong E.D."/>
            <person name="Lloyd P."/>
            <person name="Skrzypek M.S."/>
            <person name="Miyasato S.R."/>
            <person name="Simison M."/>
            <person name="Cherry J.M."/>
        </authorList>
    </citation>
    <scope>GENOME REANNOTATION</scope>
    <source>
        <strain>ATCC 204508 / S288c</strain>
    </source>
</reference>
<reference key="4">
    <citation type="journal article" date="2001" name="Nat. Cell Biol.">
        <title>Skp1 forms multiple protein complexes, including RAVE, a regulator of V-ATPase assembly.</title>
        <authorList>
            <person name="Seol J.H."/>
            <person name="Shevchenko A."/>
            <person name="Shevchenko A."/>
            <person name="Deshaies R.J."/>
        </authorList>
    </citation>
    <scope>INTERACTION WITH CDC53 AND SKP1</scope>
    <scope>IDENTIFICATION BY MASS SPECTROMETRY</scope>
    <scope>DOMAIN F-BOX</scope>
</reference>
<reference key="5">
    <citation type="journal article" date="2003" name="Nature">
        <title>Sequencing and comparison of yeast species to identify genes and regulatory elements.</title>
        <authorList>
            <person name="Kellis M."/>
            <person name="Patterson N."/>
            <person name="Endrizzi M."/>
            <person name="Birren B.W."/>
            <person name="Lander E.S."/>
        </authorList>
    </citation>
    <scope>IDENTIFICATION OF PROBABLE INITIATION SITE</scope>
</reference>
<reference key="6">
    <citation type="journal article" date="2006" name="Mol. Microbiol.">
        <title>Proteasome- and SCF-dependent degradation of yeast adenine deaminase upon transition from proliferation to quiescence requires a new F-box protein named Saf1p.</title>
        <authorList>
            <person name="Escusa S."/>
            <person name="Camblong J."/>
            <person name="Galan J.M."/>
            <person name="Pinson B."/>
            <person name="Daignan-Fornier B."/>
        </authorList>
    </citation>
    <scope>FUNCTION</scope>
</reference>
<reference key="7">
    <citation type="journal article" date="2007" name="J. Biol. Chem.">
        <title>Skp1-Cullin-F-box-dependent degradation of Aah1p requires its interaction with the F-box protein Saf1p.</title>
        <authorList>
            <person name="Escusa S."/>
            <person name="Laporte D."/>
            <person name="Massoni A."/>
            <person name="Boucherie H."/>
            <person name="Dautant A."/>
            <person name="Daignan-Fornier B."/>
        </authorList>
    </citation>
    <scope>FUNCTION</scope>
    <scope>INTERACTION WITH SKP1 AND AAH1</scope>
    <scope>MUTAGENESIS OF LEU-24; LEU-35; ARG-263; ARG-264; GLY-372; SER-387 AND LEU-580</scope>
</reference>
<reference key="8">
    <citation type="journal article" date="2007" name="J. Proteome Res.">
        <title>Large-scale phosphorylation analysis of alpha-factor-arrested Saccharomyces cerevisiae.</title>
        <authorList>
            <person name="Li X."/>
            <person name="Gerber S.A."/>
            <person name="Rudner A.D."/>
            <person name="Beausoleil S.A."/>
            <person name="Haas W."/>
            <person name="Villen J."/>
            <person name="Elias J.E."/>
            <person name="Gygi S.P."/>
        </authorList>
    </citation>
    <scope>PHOSPHORYLATION [LARGE SCALE ANALYSIS] AT SER-16</scope>
    <scope>IDENTIFICATION BY MASS SPECTROMETRY [LARGE SCALE ANALYSIS]</scope>
    <source>
        <strain>ADR376</strain>
    </source>
</reference>
<reference key="9">
    <citation type="journal article" date="2008" name="Mol. Cell. Proteomics">
        <title>A multidimensional chromatography technology for in-depth phosphoproteome analysis.</title>
        <authorList>
            <person name="Albuquerque C.P."/>
            <person name="Smolka M.B."/>
            <person name="Payne S.H."/>
            <person name="Bafna V."/>
            <person name="Eng J."/>
            <person name="Zhou H."/>
        </authorList>
    </citation>
    <scope>PHOSPHORYLATION [LARGE SCALE ANALYSIS] AT SER-16 AND SER-266</scope>
    <scope>IDENTIFICATION BY MASS SPECTROMETRY [LARGE SCALE ANALYSIS]</scope>
</reference>
<reference key="10">
    <citation type="journal article" date="2009" name="Science">
        <title>Global analysis of Cdk1 substrate phosphorylation sites provides insights into evolution.</title>
        <authorList>
            <person name="Holt L.J."/>
            <person name="Tuch B.B."/>
            <person name="Villen J."/>
            <person name="Johnson A.D."/>
            <person name="Gygi S.P."/>
            <person name="Morgan D.O."/>
        </authorList>
    </citation>
    <scope>PHOSPHORYLATION [LARGE SCALE ANALYSIS] AT SER-16</scope>
    <scope>IDENTIFICATION BY MASS SPECTROMETRY [LARGE SCALE ANALYSIS]</scope>
</reference>
<reference key="11">
    <citation type="journal article" date="2010" name="Proteomics">
        <title>Remodeling of the SCF complex-mediated ubiquitination system by compositional alteration of incorporated F-box proteins.</title>
        <authorList>
            <person name="Kato M."/>
            <person name="Kito K."/>
            <person name="Ota K."/>
            <person name="Ito T."/>
        </authorList>
    </citation>
    <scope>IDENTIFICATION IN THE SCF(SAF1) COMPLEX</scope>
</reference>
<accession>P38352</accession>
<accession>D6VQS5</accession>
<protein>
    <recommendedName>
        <fullName>SCF-associated factor 1</fullName>
    </recommendedName>
</protein>
<keyword id="KW-0597">Phosphoprotein</keyword>
<keyword id="KW-1185">Reference proteome</keyword>
<keyword id="KW-0677">Repeat</keyword>
<keyword id="KW-0833">Ubl conjugation pathway</keyword>
<feature type="chain" id="PRO_0000206658" description="SCF-associated factor 1">
    <location>
        <begin position="1"/>
        <end position="637"/>
    </location>
</feature>
<feature type="domain" description="F-box">
    <location>
        <begin position="14"/>
        <end position="63"/>
    </location>
</feature>
<feature type="repeat" description="RCC1 1">
    <location>
        <begin position="109"/>
        <end position="202"/>
    </location>
</feature>
<feature type="repeat" description="RCC1 2">
    <location>
        <begin position="565"/>
        <end position="635"/>
    </location>
</feature>
<feature type="region of interest" description="Disordered" evidence="1">
    <location>
        <begin position="242"/>
        <end position="315"/>
    </location>
</feature>
<feature type="compositionally biased region" description="Polar residues" evidence="1">
    <location>
        <begin position="244"/>
        <end position="260"/>
    </location>
</feature>
<feature type="compositionally biased region" description="Low complexity" evidence="1">
    <location>
        <begin position="289"/>
        <end position="305"/>
    </location>
</feature>
<feature type="modified residue" description="Phosphoserine" evidence="7 8 9">
    <location>
        <position position="16"/>
    </location>
</feature>
<feature type="modified residue" description="Phosphoserine" evidence="8">
    <location>
        <position position="266"/>
    </location>
</feature>
<feature type="mutagenesis site" description="In saf1-5; impairs the interaction with SKP1." evidence="4">
    <original>L</original>
    <variation>P</variation>
    <location>
        <position position="24"/>
    </location>
</feature>
<feature type="mutagenesis site" description="In saf1-6; impairs the interaction with SKP1." evidence="4">
    <original>L</original>
    <variation>P</variation>
    <location>
        <position position="35"/>
    </location>
</feature>
<feature type="mutagenesis site" description="In saf1-4; impairs the protein stability; when associated with K-264." evidence="4">
    <original>R</original>
    <variation>K</variation>
    <location>
        <position position="263"/>
    </location>
</feature>
<feature type="mutagenesis site" description="In saf1-4; impairs the protein stability; when associated with K-263." evidence="4">
    <original>R</original>
    <variation>K</variation>
    <location>
        <position position="264"/>
    </location>
</feature>
<feature type="mutagenesis site" description="In saf1-1; impairs the protein stability." evidence="4">
    <original>G</original>
    <variation>V</variation>
    <location>
        <position position="372"/>
    </location>
</feature>
<feature type="mutagenesis site" description="In saf1-2; impairs the protein stability." evidence="4">
    <original>S</original>
    <variation>F</variation>
    <location>
        <position position="387"/>
    </location>
</feature>
<feature type="mutagenesis site" description="In saf1-3; impairs the protein stability." evidence="4">
    <original>L</original>
    <variation>S</variation>
    <location>
        <position position="580"/>
    </location>
</feature>
<proteinExistence type="evidence at protein level"/>
<comment type="function">
    <text evidence="3 4">Substrate recognition component of a SCF (SKP1-CUL1-F-box protein) E3 ubiquitin-protein ligase complex which mediates the ubiquitination and subsequent proteasomal degradation of target proteins. Targets AAH1 adenine deaminase for proteasome-dependent degradation upon entry into quiescence. Targets also URA7.</text>
</comment>
<comment type="pathway">
    <text>Protein modification; protein ubiquitination.</text>
</comment>
<comment type="subunit">
    <text evidence="2 4 5">Interacts with AAH1, SKP1 and CDC53. Component of the SCF(SAF1) complex containing CDC53, SKP1, HRT1 and SAF1.</text>
</comment>
<comment type="interaction">
    <interactant intactId="EBI-21172">
        <id>P38352</id>
    </interactant>
    <interactant intactId="EBI-2197">
        <id>P53909</id>
        <label>AAH1</label>
    </interactant>
    <organismsDiffer>false</organismsDiffer>
    <experiments>3</experiments>
</comment>
<comment type="interaction">
    <interactant intactId="EBI-21172">
        <id>P38352</id>
    </interactant>
    <interactant intactId="EBI-4321">
        <id>Q12018</id>
        <label>CDC53</label>
    </interactant>
    <organismsDiffer>false</organismsDiffer>
    <experiments>8</experiments>
</comment>
<comment type="interaction">
    <interactant intactId="EBI-21172">
        <id>P38352</id>
    </interactant>
    <interactant intactId="EBI-31686">
        <id>Q08273</id>
        <label>HRT1</label>
    </interactant>
    <organismsDiffer>false</organismsDiffer>
    <experiments>2</experiments>
</comment>
<comment type="interaction">
    <interactant intactId="EBI-21172">
        <id>P38352</id>
    </interactant>
    <interactant intactId="EBI-4090">
        <id>P52286</id>
        <label>SKP1</label>
    </interactant>
    <organismsDiffer>false</organismsDiffer>
    <experiments>5</experiments>
</comment>
<comment type="sequence caution" evidence="6">
    <conflict type="erroneous initiation">
        <sequence resource="EMBL-CDS" id="CAA53643"/>
    </conflict>
</comment>
<comment type="sequence caution" evidence="6">
    <conflict type="erroneous initiation">
        <sequence resource="EMBL-CDS" id="CAA85244"/>
    </conflict>
</comment>
<sequence>MSEVESREKEPDAGLSPDIVQATLPFLSSDDIKNLSQTNKYYNTLLDFDHSKILWHELFHKAFGTLKTNDEPFQGRNSAEFKTCTETILREAFPTLSWQEVYQLRAYDAKFYSWGYLKHGRLGYTASSNNELVATSLNGPSPRFKYGVNTPTEVPWFNSRTTSRTSNFTPSEDPLSAIKKDGDEIIAQVSSGGFSFQILTESGNLYSSGSTFSGGLKGPGPSGSQHDYNPFREMIHNMERSYPRITSRSNGSTVNTTGTFSGRRMSGSHPSTAYEPGNATTAQHITIDSGGAPAASPGGSHSGVPRTTMPSMGPHENIYSQIEMLERSANKAVPGNNHIRRMFARNSFPLYSGRDENLGSFNDIQFVAVSSGRSHFLAMDTDNNIYSWDSTESDQGVKIEFANLPSRATNPILKIASGWNFNCCYIYKVGLVAWKERDAIQKGESFAFAKYEIVPNTNDVNGDSRIVDFACLQDNCVFFINNNGDKLWKYHNGLNQIVDLNIVGKLCKINACFASLVLFTDTHCYTLKVTNGDVDKDSLTELDINENVISVASGDYHTVALTERGHLYSWGIESQDCGCLGLGPSEKIVNELHIGNWEGQRNIRVVKPTKIELPEDYICVSVTAGGWQTGALIIKKH</sequence>
<gene>
    <name type="primary">SAF1</name>
    <name type="ordered locus">YBR280C</name>
    <name type="ORF">YBR2017</name>
</gene>